<accession>Q2NX54</accession>
<protein>
    <recommendedName>
        <fullName evidence="1">tRNA modification GTPase MnmE</fullName>
        <ecNumber evidence="1">3.6.-.-</ecNumber>
    </recommendedName>
</protein>
<comment type="function">
    <text evidence="1">Exhibits a very high intrinsic GTPase hydrolysis rate. Involved in the addition of a carboxymethylaminomethyl (cmnm) group at the wobble position (U34) of certain tRNAs, forming tRNA-cmnm(5)s(2)U34.</text>
</comment>
<comment type="cofactor">
    <cofactor evidence="1">
        <name>K(+)</name>
        <dbReference type="ChEBI" id="CHEBI:29103"/>
    </cofactor>
    <text evidence="1">Binds 1 potassium ion per subunit.</text>
</comment>
<comment type="subunit">
    <text evidence="1">Homodimer. Heterotetramer of two MnmE and two MnmG subunits.</text>
</comment>
<comment type="subcellular location">
    <subcellularLocation>
        <location evidence="1">Cytoplasm</location>
    </subcellularLocation>
</comment>
<comment type="similarity">
    <text evidence="1">Belongs to the TRAFAC class TrmE-Era-EngA-EngB-Septin-like GTPase superfamily. TrmE GTPase family.</text>
</comment>
<evidence type="ECO:0000255" key="1">
    <source>
        <dbReference type="HAMAP-Rule" id="MF_00379"/>
    </source>
</evidence>
<reference key="1">
    <citation type="journal article" date="2005" name="Jpn. Agric. Res. Q.">
        <title>Genome sequence of Xanthomonas oryzae pv. oryzae suggests contribution of large numbers of effector genes and insertion sequences to its race diversity.</title>
        <authorList>
            <person name="Ochiai H."/>
            <person name="Inoue Y."/>
            <person name="Takeya M."/>
            <person name="Sasaki A."/>
            <person name="Kaku H."/>
        </authorList>
    </citation>
    <scope>NUCLEOTIDE SEQUENCE [LARGE SCALE GENOMIC DNA]</scope>
    <source>
        <strain>MAFF 311018</strain>
    </source>
</reference>
<organism>
    <name type="scientific">Xanthomonas oryzae pv. oryzae (strain MAFF 311018)</name>
    <dbReference type="NCBI Taxonomy" id="342109"/>
    <lineage>
        <taxon>Bacteria</taxon>
        <taxon>Pseudomonadati</taxon>
        <taxon>Pseudomonadota</taxon>
        <taxon>Gammaproteobacteria</taxon>
        <taxon>Lysobacterales</taxon>
        <taxon>Lysobacteraceae</taxon>
        <taxon>Xanthomonas</taxon>
    </lineage>
</organism>
<proteinExistence type="inferred from homology"/>
<dbReference type="EC" id="3.6.-.-" evidence="1"/>
<dbReference type="EMBL" id="AP008229">
    <property type="protein sequence ID" value="BAE71123.1"/>
    <property type="molecule type" value="Genomic_DNA"/>
</dbReference>
<dbReference type="RefSeq" id="WP_011409860.1">
    <property type="nucleotide sequence ID" value="NC_007705.1"/>
</dbReference>
<dbReference type="SMR" id="Q2NX54"/>
<dbReference type="KEGG" id="xom:XOO4368"/>
<dbReference type="HOGENOM" id="CLU_019624_4_1_6"/>
<dbReference type="GO" id="GO:0005829">
    <property type="term" value="C:cytosol"/>
    <property type="evidence" value="ECO:0007669"/>
    <property type="project" value="TreeGrafter"/>
</dbReference>
<dbReference type="GO" id="GO:0005525">
    <property type="term" value="F:GTP binding"/>
    <property type="evidence" value="ECO:0007669"/>
    <property type="project" value="UniProtKB-UniRule"/>
</dbReference>
<dbReference type="GO" id="GO:0003924">
    <property type="term" value="F:GTPase activity"/>
    <property type="evidence" value="ECO:0007669"/>
    <property type="project" value="UniProtKB-UniRule"/>
</dbReference>
<dbReference type="GO" id="GO:0046872">
    <property type="term" value="F:metal ion binding"/>
    <property type="evidence" value="ECO:0007669"/>
    <property type="project" value="UniProtKB-KW"/>
</dbReference>
<dbReference type="GO" id="GO:0030488">
    <property type="term" value="P:tRNA methylation"/>
    <property type="evidence" value="ECO:0007669"/>
    <property type="project" value="TreeGrafter"/>
</dbReference>
<dbReference type="GO" id="GO:0002098">
    <property type="term" value="P:tRNA wobble uridine modification"/>
    <property type="evidence" value="ECO:0007669"/>
    <property type="project" value="TreeGrafter"/>
</dbReference>
<dbReference type="CDD" id="cd04164">
    <property type="entry name" value="trmE"/>
    <property type="match status" value="1"/>
</dbReference>
<dbReference type="CDD" id="cd14858">
    <property type="entry name" value="TrmE_N"/>
    <property type="match status" value="1"/>
</dbReference>
<dbReference type="FunFam" id="3.40.50.300:FF:001376">
    <property type="entry name" value="tRNA modification GTPase MnmE"/>
    <property type="match status" value="1"/>
</dbReference>
<dbReference type="Gene3D" id="3.40.50.300">
    <property type="entry name" value="P-loop containing nucleotide triphosphate hydrolases"/>
    <property type="match status" value="1"/>
</dbReference>
<dbReference type="Gene3D" id="3.30.1360.120">
    <property type="entry name" value="Probable tRNA modification gtpase trme, domain 1"/>
    <property type="match status" value="1"/>
</dbReference>
<dbReference type="Gene3D" id="1.20.120.430">
    <property type="entry name" value="tRNA modification GTPase MnmE domain 2"/>
    <property type="match status" value="1"/>
</dbReference>
<dbReference type="HAMAP" id="MF_00379">
    <property type="entry name" value="GTPase_MnmE"/>
    <property type="match status" value="1"/>
</dbReference>
<dbReference type="InterPro" id="IPR031168">
    <property type="entry name" value="G_TrmE"/>
</dbReference>
<dbReference type="InterPro" id="IPR006073">
    <property type="entry name" value="GTP-bd"/>
</dbReference>
<dbReference type="InterPro" id="IPR018948">
    <property type="entry name" value="GTP-bd_TrmE_N"/>
</dbReference>
<dbReference type="InterPro" id="IPR004520">
    <property type="entry name" value="GTPase_MnmE"/>
</dbReference>
<dbReference type="InterPro" id="IPR027368">
    <property type="entry name" value="MnmE_dom2"/>
</dbReference>
<dbReference type="InterPro" id="IPR025867">
    <property type="entry name" value="MnmE_helical"/>
</dbReference>
<dbReference type="InterPro" id="IPR027417">
    <property type="entry name" value="P-loop_NTPase"/>
</dbReference>
<dbReference type="InterPro" id="IPR005225">
    <property type="entry name" value="Small_GTP-bd"/>
</dbReference>
<dbReference type="InterPro" id="IPR027266">
    <property type="entry name" value="TrmE/GcvT_dom1"/>
</dbReference>
<dbReference type="NCBIfam" id="TIGR00450">
    <property type="entry name" value="mnmE_trmE_thdF"/>
    <property type="match status" value="1"/>
</dbReference>
<dbReference type="NCBIfam" id="NF003661">
    <property type="entry name" value="PRK05291.1-3"/>
    <property type="match status" value="1"/>
</dbReference>
<dbReference type="NCBIfam" id="TIGR00231">
    <property type="entry name" value="small_GTP"/>
    <property type="match status" value="1"/>
</dbReference>
<dbReference type="PANTHER" id="PTHR42714">
    <property type="entry name" value="TRNA MODIFICATION GTPASE GTPBP3"/>
    <property type="match status" value="1"/>
</dbReference>
<dbReference type="PANTHER" id="PTHR42714:SF2">
    <property type="entry name" value="TRNA MODIFICATION GTPASE GTPBP3, MITOCHONDRIAL"/>
    <property type="match status" value="1"/>
</dbReference>
<dbReference type="Pfam" id="PF01926">
    <property type="entry name" value="MMR_HSR1"/>
    <property type="match status" value="1"/>
</dbReference>
<dbReference type="Pfam" id="PF12631">
    <property type="entry name" value="MnmE_helical"/>
    <property type="match status" value="1"/>
</dbReference>
<dbReference type="Pfam" id="PF10396">
    <property type="entry name" value="TrmE_N"/>
    <property type="match status" value="1"/>
</dbReference>
<dbReference type="PRINTS" id="PR00326">
    <property type="entry name" value="GTP1OBG"/>
</dbReference>
<dbReference type="SUPFAM" id="SSF52540">
    <property type="entry name" value="P-loop containing nucleoside triphosphate hydrolases"/>
    <property type="match status" value="1"/>
</dbReference>
<dbReference type="PROSITE" id="PS51709">
    <property type="entry name" value="G_TRME"/>
    <property type="match status" value="1"/>
</dbReference>
<name>MNME_XANOM</name>
<keyword id="KW-0963">Cytoplasm</keyword>
<keyword id="KW-0342">GTP-binding</keyword>
<keyword id="KW-0378">Hydrolase</keyword>
<keyword id="KW-0460">Magnesium</keyword>
<keyword id="KW-0479">Metal-binding</keyword>
<keyword id="KW-0547">Nucleotide-binding</keyword>
<keyword id="KW-0630">Potassium</keyword>
<keyword id="KW-0819">tRNA processing</keyword>
<feature type="chain" id="PRO_1000048907" description="tRNA modification GTPase MnmE">
    <location>
        <begin position="1"/>
        <end position="446"/>
    </location>
</feature>
<feature type="domain" description="TrmE-type G">
    <location>
        <begin position="216"/>
        <end position="368"/>
    </location>
</feature>
<feature type="binding site" evidence="1">
    <location>
        <position position="24"/>
    </location>
    <ligand>
        <name>(6S)-5-formyl-5,6,7,8-tetrahydrofolate</name>
        <dbReference type="ChEBI" id="CHEBI:57457"/>
    </ligand>
</feature>
<feature type="binding site" evidence="1">
    <location>
        <position position="81"/>
    </location>
    <ligand>
        <name>(6S)-5-formyl-5,6,7,8-tetrahydrofolate</name>
        <dbReference type="ChEBI" id="CHEBI:57457"/>
    </ligand>
</feature>
<feature type="binding site" evidence="1">
    <location>
        <position position="120"/>
    </location>
    <ligand>
        <name>(6S)-5-formyl-5,6,7,8-tetrahydrofolate</name>
        <dbReference type="ChEBI" id="CHEBI:57457"/>
    </ligand>
</feature>
<feature type="binding site" evidence="1">
    <location>
        <begin position="226"/>
        <end position="231"/>
    </location>
    <ligand>
        <name>GTP</name>
        <dbReference type="ChEBI" id="CHEBI:37565"/>
    </ligand>
</feature>
<feature type="binding site" evidence="1">
    <location>
        <position position="226"/>
    </location>
    <ligand>
        <name>K(+)</name>
        <dbReference type="ChEBI" id="CHEBI:29103"/>
    </ligand>
</feature>
<feature type="binding site" evidence="1">
    <location>
        <position position="230"/>
    </location>
    <ligand>
        <name>Mg(2+)</name>
        <dbReference type="ChEBI" id="CHEBI:18420"/>
    </ligand>
</feature>
<feature type="binding site" evidence="1">
    <location>
        <begin position="245"/>
        <end position="251"/>
    </location>
    <ligand>
        <name>GTP</name>
        <dbReference type="ChEBI" id="CHEBI:37565"/>
    </ligand>
</feature>
<feature type="binding site" evidence="1">
    <location>
        <position position="245"/>
    </location>
    <ligand>
        <name>K(+)</name>
        <dbReference type="ChEBI" id="CHEBI:29103"/>
    </ligand>
</feature>
<feature type="binding site" evidence="1">
    <location>
        <position position="247"/>
    </location>
    <ligand>
        <name>K(+)</name>
        <dbReference type="ChEBI" id="CHEBI:29103"/>
    </ligand>
</feature>
<feature type="binding site" evidence="1">
    <location>
        <position position="250"/>
    </location>
    <ligand>
        <name>K(+)</name>
        <dbReference type="ChEBI" id="CHEBI:29103"/>
    </ligand>
</feature>
<feature type="binding site" evidence="1">
    <location>
        <position position="251"/>
    </location>
    <ligand>
        <name>Mg(2+)</name>
        <dbReference type="ChEBI" id="CHEBI:18420"/>
    </ligand>
</feature>
<feature type="binding site" evidence="1">
    <location>
        <begin position="270"/>
        <end position="273"/>
    </location>
    <ligand>
        <name>GTP</name>
        <dbReference type="ChEBI" id="CHEBI:37565"/>
    </ligand>
</feature>
<feature type="binding site" evidence="1">
    <location>
        <position position="446"/>
    </location>
    <ligand>
        <name>(6S)-5-formyl-5,6,7,8-tetrahydrofolate</name>
        <dbReference type="ChEBI" id="CHEBI:57457"/>
    </ligand>
</feature>
<sequence>MSSSTSTIVAIASAAGTGGVGIVRLSGPQSRQIAVQLGVARLQPRHAHYARFRDAQGAVIDDGIALWFNAPHSFTGEDVVELQGHGSPVLLRQLVARCIELGARQARAGEFSERAFLNGKLDLAQAEAIADVIAAGDLRAARAARRALDGVFSRRVDAVAHTLTRLRIHVEAAIDFADEPLDTLGGNQVRDGLTQARTLLAQLLRDAERGRTLRDGLHAVLIGPPNAGKSSLLNALAGSERAIVTDVAGTTRDTLHEAIQLDGFELTLVDTAGLRDGGDAIEREGMRRARAELERADLALVVLDARDPQAARAAIGDAIDAVPRQLWIHNKCDLLSDAAPLDVNAIAVSAVTGQGLEQLHIRLRELALGDGVEGVDGEFSARTRHVEALRRAERHVDAADLELGFEQLELAAEELRLAHEALGEITGKISADDLLGKIFSSFCIGK</sequence>
<gene>
    <name evidence="1" type="primary">mnmE</name>
    <name evidence="1" type="synonym">trmE</name>
    <name type="ordered locus">XOO4368</name>
</gene>